<accession>C0H559</accession>
<protein>
    <recommendedName>
        <fullName evidence="1">Alpha-tubulin N-acetyltransferase</fullName>
        <shortName evidence="1">Alpha-TAT</shortName>
        <shortName evidence="1">TAT</shortName>
        <ecNumber evidence="1">2.3.1.108</ecNumber>
    </recommendedName>
    <alternativeName>
        <fullName evidence="1">Acetyltransferase mec-17 homolog</fullName>
    </alternativeName>
</protein>
<comment type="function">
    <text evidence="1">Specifically acetylates 'Lys-40' in alpha-tubulin on the lumenal side of microtubules. Promotes microtubule destabilization and accelerates microtubule dynamics; this activity may be independent of acetylation activity. Acetylates alpha-tubulin with a slow enzymatic rate, due to a catalytic site that is not optimized for acetyl transfer. Enters the microtubule through each end and diffuses quickly throughout the lumen of microtubules. Acetylates only long/old microtubules because of its slow acetylation rate since it does not have time to act on dynamically unstable microtubules before the enzyme is released.</text>
</comment>
<comment type="catalytic activity">
    <reaction evidence="1">
        <text>L-lysyl-[alpha-tubulin] + acetyl-CoA = N(6)-acetyl-L-lysyl-[alpha-tubulin] + CoA + H(+)</text>
        <dbReference type="Rhea" id="RHEA:15277"/>
        <dbReference type="Rhea" id="RHEA-COMP:11278"/>
        <dbReference type="Rhea" id="RHEA-COMP:11279"/>
        <dbReference type="ChEBI" id="CHEBI:15378"/>
        <dbReference type="ChEBI" id="CHEBI:29969"/>
        <dbReference type="ChEBI" id="CHEBI:57287"/>
        <dbReference type="ChEBI" id="CHEBI:57288"/>
        <dbReference type="ChEBI" id="CHEBI:61930"/>
        <dbReference type="EC" id="2.3.1.108"/>
    </reaction>
</comment>
<comment type="similarity">
    <text evidence="1">Belongs to the acetyltransferase ATAT1 family.</text>
</comment>
<dbReference type="EC" id="2.3.1.108" evidence="1"/>
<dbReference type="EMBL" id="AL844508">
    <property type="protein sequence ID" value="CAX64236.2"/>
    <property type="molecule type" value="Genomic_DNA"/>
</dbReference>
<dbReference type="SMR" id="C0H559"/>
<dbReference type="PaxDb" id="5833-PFI1220w"/>
<dbReference type="EnsemblProtists" id="CAX64236">
    <property type="protein sequence ID" value="CAX64236"/>
    <property type="gene ID" value="PF3D7_0924900"/>
</dbReference>
<dbReference type="HOGENOM" id="CLU_025013_3_0_1"/>
<dbReference type="InParanoid" id="C0H559"/>
<dbReference type="OrthoDB" id="447510at2759"/>
<dbReference type="PhylomeDB" id="C0H559"/>
<dbReference type="Reactome" id="R-PFA-5617833">
    <property type="pathway name" value="Cilium Assembly"/>
</dbReference>
<dbReference type="Proteomes" id="UP000001450">
    <property type="component" value="Chromosome 9"/>
</dbReference>
<dbReference type="GO" id="GO:0005874">
    <property type="term" value="C:microtubule"/>
    <property type="evidence" value="ECO:0007669"/>
    <property type="project" value="InterPro"/>
</dbReference>
<dbReference type="GO" id="GO:0019799">
    <property type="term" value="F:tubulin N-acetyltransferase activity"/>
    <property type="evidence" value="ECO:0007669"/>
    <property type="project" value="UniProtKB-UniRule"/>
</dbReference>
<dbReference type="GO" id="GO:0070507">
    <property type="term" value="P:regulation of microtubule cytoskeleton organization"/>
    <property type="evidence" value="ECO:0007669"/>
    <property type="project" value="UniProtKB-UniRule"/>
</dbReference>
<dbReference type="Gene3D" id="3.40.630.30">
    <property type="match status" value="1"/>
</dbReference>
<dbReference type="HAMAP" id="MF_03130">
    <property type="entry name" value="mec17"/>
    <property type="match status" value="1"/>
</dbReference>
<dbReference type="InterPro" id="IPR016181">
    <property type="entry name" value="Acyl_CoA_acyltransferase"/>
</dbReference>
<dbReference type="InterPro" id="IPR038746">
    <property type="entry name" value="Atat"/>
</dbReference>
<dbReference type="InterPro" id="IPR007965">
    <property type="entry name" value="GNAT_ATAT"/>
</dbReference>
<dbReference type="PANTHER" id="PTHR12327">
    <property type="entry name" value="ALPHA-TUBULIN N-ACETYLTRANSFERASE 1"/>
    <property type="match status" value="1"/>
</dbReference>
<dbReference type="PANTHER" id="PTHR12327:SF0">
    <property type="entry name" value="ALPHA-TUBULIN N-ACETYLTRANSFERASE 1"/>
    <property type="match status" value="1"/>
</dbReference>
<dbReference type="Pfam" id="PF05301">
    <property type="entry name" value="Acetyltransf_16"/>
    <property type="match status" value="1"/>
</dbReference>
<dbReference type="SUPFAM" id="SSF55729">
    <property type="entry name" value="Acyl-CoA N-acyltransferases (Nat)"/>
    <property type="match status" value="1"/>
</dbReference>
<dbReference type="PROSITE" id="PS51730">
    <property type="entry name" value="GNAT_ATAT"/>
    <property type="match status" value="1"/>
</dbReference>
<organism>
    <name type="scientific">Plasmodium falciparum (isolate 3D7)</name>
    <dbReference type="NCBI Taxonomy" id="36329"/>
    <lineage>
        <taxon>Eukaryota</taxon>
        <taxon>Sar</taxon>
        <taxon>Alveolata</taxon>
        <taxon>Apicomplexa</taxon>
        <taxon>Aconoidasida</taxon>
        <taxon>Haemosporida</taxon>
        <taxon>Plasmodiidae</taxon>
        <taxon>Plasmodium</taxon>
        <taxon>Plasmodium (Laverania)</taxon>
    </lineage>
</organism>
<name>ATAT_PLAF7</name>
<evidence type="ECO:0000255" key="1">
    <source>
        <dbReference type="HAMAP-Rule" id="MF_03130"/>
    </source>
</evidence>
<evidence type="ECO:0000305" key="2"/>
<gene>
    <name evidence="2" type="primary">ATAT</name>
    <name type="ORF">PF3D7_0924900</name>
    <name type="ORF">PFI1220w</name>
</gene>
<feature type="chain" id="PRO_0000402078" description="Alpha-tubulin N-acetyltransferase">
    <location>
        <begin position="1"/>
        <end position="184"/>
    </location>
</feature>
<feature type="domain" description="N-acetyltransferase" evidence="1">
    <location>
        <begin position="1"/>
        <end position="170"/>
    </location>
</feature>
<feature type="binding site" evidence="1">
    <location>
        <begin position="104"/>
        <end position="117"/>
    </location>
    <ligand>
        <name>acetyl-CoA</name>
        <dbReference type="ChEBI" id="CHEBI:57288"/>
    </ligand>
</feature>
<feature type="binding site" evidence="1">
    <location>
        <begin position="140"/>
        <end position="149"/>
    </location>
    <ligand>
        <name>acetyl-CoA</name>
        <dbReference type="ChEBI" id="CHEBI:57288"/>
    </ligand>
</feature>
<feature type="site" description="Crucial for catalytic activity" evidence="1">
    <location>
        <position position="46"/>
    </location>
</feature>
<proteinExistence type="inferred from homology"/>
<reference key="1">
    <citation type="journal article" date="2002" name="Nature">
        <title>Genome sequence of the human malaria parasite Plasmodium falciparum.</title>
        <authorList>
            <person name="Gardner M.J."/>
            <person name="Hall N."/>
            <person name="Fung E."/>
            <person name="White O."/>
            <person name="Berriman M."/>
            <person name="Hyman R.W."/>
            <person name="Carlton J.M."/>
            <person name="Pain A."/>
            <person name="Nelson K.E."/>
            <person name="Bowman S."/>
            <person name="Paulsen I.T."/>
            <person name="James K.D."/>
            <person name="Eisen J.A."/>
            <person name="Rutherford K.M."/>
            <person name="Salzberg S.L."/>
            <person name="Craig A."/>
            <person name="Kyes S."/>
            <person name="Chan M.-S."/>
            <person name="Nene V."/>
            <person name="Shallom S.J."/>
            <person name="Suh B."/>
            <person name="Peterson J."/>
            <person name="Angiuoli S."/>
            <person name="Pertea M."/>
            <person name="Allen J."/>
            <person name="Selengut J."/>
            <person name="Haft D."/>
            <person name="Mather M.W."/>
            <person name="Vaidya A.B."/>
            <person name="Martin D.M.A."/>
            <person name="Fairlamb A.H."/>
            <person name="Fraunholz M.J."/>
            <person name="Roos D.S."/>
            <person name="Ralph S.A."/>
            <person name="McFadden G.I."/>
            <person name="Cummings L.M."/>
            <person name="Subramanian G.M."/>
            <person name="Mungall C."/>
            <person name="Venter J.C."/>
            <person name="Carucci D.J."/>
            <person name="Hoffman S.L."/>
            <person name="Newbold C."/>
            <person name="Davis R.W."/>
            <person name="Fraser C.M."/>
            <person name="Barrell B.G."/>
        </authorList>
    </citation>
    <scope>NUCLEOTIDE SEQUENCE [LARGE SCALE GENOMIC DNA]</scope>
    <source>
        <strain>3D7</strain>
    </source>
</reference>
<reference key="2">
    <citation type="journal article" date="2002" name="Nature">
        <title>Sequence of Plasmodium falciparum chromosomes 1, 3-9 and 13.</title>
        <authorList>
            <person name="Hall N."/>
            <person name="Pain A."/>
            <person name="Berriman M."/>
            <person name="Churcher C.M."/>
            <person name="Harris B."/>
            <person name="Harris D."/>
            <person name="Mungall K.L."/>
            <person name="Bowman S."/>
            <person name="Atkin R."/>
            <person name="Baker S."/>
            <person name="Barron A."/>
            <person name="Brooks K."/>
            <person name="Buckee C.O."/>
            <person name="Burrows C."/>
            <person name="Cherevach I."/>
            <person name="Chillingworth C."/>
            <person name="Chillingworth T."/>
            <person name="Christodoulou Z."/>
            <person name="Clark L."/>
            <person name="Clark R."/>
            <person name="Corton C."/>
            <person name="Cronin A."/>
            <person name="Davies R.M."/>
            <person name="Davis P."/>
            <person name="Dear P."/>
            <person name="Dearden F."/>
            <person name="Doggett J."/>
            <person name="Feltwell T."/>
            <person name="Goble A."/>
            <person name="Goodhead I."/>
            <person name="Gwilliam R."/>
            <person name="Hamlin N."/>
            <person name="Hance Z."/>
            <person name="Harper D."/>
            <person name="Hauser H."/>
            <person name="Hornsby T."/>
            <person name="Holroyd S."/>
            <person name="Horrocks P."/>
            <person name="Humphray S."/>
            <person name="Jagels K."/>
            <person name="James K.D."/>
            <person name="Johnson D."/>
            <person name="Kerhornou A."/>
            <person name="Knights A."/>
            <person name="Konfortov B."/>
            <person name="Kyes S."/>
            <person name="Larke N."/>
            <person name="Lawson D."/>
            <person name="Lennard N."/>
            <person name="Line A."/>
            <person name="Maddison M."/>
            <person name="Mclean J."/>
            <person name="Mooney P."/>
            <person name="Moule S."/>
            <person name="Murphy L."/>
            <person name="Oliver K."/>
            <person name="Ormond D."/>
            <person name="Price C."/>
            <person name="Quail M.A."/>
            <person name="Rabbinowitsch E."/>
            <person name="Rajandream M.A."/>
            <person name="Rutter S."/>
            <person name="Rutherford K.M."/>
            <person name="Sanders M."/>
            <person name="Simmonds M."/>
            <person name="Seeger K."/>
            <person name="Sharp S."/>
            <person name="Smith R."/>
            <person name="Squares R."/>
            <person name="Squares S."/>
            <person name="Stevens K."/>
            <person name="Taylor K."/>
            <person name="Tivey A."/>
            <person name="Unwin L."/>
            <person name="Whitehead S."/>
            <person name="Woodward J.R."/>
            <person name="Sulston J.E."/>
            <person name="Craig A."/>
            <person name="Newbold C."/>
            <person name="Barrell B.G."/>
        </authorList>
    </citation>
    <scope>NUCLEOTIDE SEQUENCE [LARGE SCALE GENOMIC DNA]</scope>
    <source>
        <strain>3D7</strain>
    </source>
</reference>
<sequence>METFNHIDIKKYTREDLLYLRNTNNVLFKMFQKQVDEIACLSSKEQKLCGTLTSINNIINENYTIYCLIHTDGLIGFIKIGEKNLYLYDKIKLHYGKCTCVLDFYILEKFQKRGLGIKIFNFMLKDNDISAFCLCYDNPSYKLQNFLKKYFSPCVLIKQPNHFVIFSNYFKNVSIKKVYERISN</sequence>
<keyword id="KW-0012">Acyltransferase</keyword>
<keyword id="KW-1185">Reference proteome</keyword>
<keyword id="KW-0808">Transferase</keyword>